<name>RLME_PSEF5</name>
<gene>
    <name evidence="1" type="primary">rlmE</name>
    <name evidence="1" type="synonym">ftsJ</name>
    <name evidence="1" type="synonym">rrmJ</name>
    <name type="ordered locus">PFL_0835</name>
</gene>
<proteinExistence type="inferred from homology"/>
<accession>Q4KIG3</accession>
<feature type="chain" id="PRO_0000155521" description="Ribosomal RNA large subunit methyltransferase E">
    <location>
        <begin position="1"/>
        <end position="209"/>
    </location>
</feature>
<feature type="region of interest" description="Disordered" evidence="2">
    <location>
        <begin position="182"/>
        <end position="209"/>
    </location>
</feature>
<feature type="compositionally biased region" description="Basic and acidic residues" evidence="2">
    <location>
        <begin position="182"/>
        <end position="196"/>
    </location>
</feature>
<feature type="active site" description="Proton acceptor" evidence="1">
    <location>
        <position position="161"/>
    </location>
</feature>
<feature type="binding site" evidence="1">
    <location>
        <position position="60"/>
    </location>
    <ligand>
        <name>S-adenosyl-L-methionine</name>
        <dbReference type="ChEBI" id="CHEBI:59789"/>
    </ligand>
</feature>
<feature type="binding site" evidence="1">
    <location>
        <position position="62"/>
    </location>
    <ligand>
        <name>S-adenosyl-L-methionine</name>
        <dbReference type="ChEBI" id="CHEBI:59789"/>
    </ligand>
</feature>
<feature type="binding site" evidence="1">
    <location>
        <position position="80"/>
    </location>
    <ligand>
        <name>S-adenosyl-L-methionine</name>
        <dbReference type="ChEBI" id="CHEBI:59789"/>
    </ligand>
</feature>
<feature type="binding site" evidence="1">
    <location>
        <position position="96"/>
    </location>
    <ligand>
        <name>S-adenosyl-L-methionine</name>
        <dbReference type="ChEBI" id="CHEBI:59789"/>
    </ligand>
</feature>
<feature type="binding site" evidence="1">
    <location>
        <position position="121"/>
    </location>
    <ligand>
        <name>S-adenosyl-L-methionine</name>
        <dbReference type="ChEBI" id="CHEBI:59789"/>
    </ligand>
</feature>
<evidence type="ECO:0000255" key="1">
    <source>
        <dbReference type="HAMAP-Rule" id="MF_01547"/>
    </source>
</evidence>
<evidence type="ECO:0000256" key="2">
    <source>
        <dbReference type="SAM" id="MobiDB-lite"/>
    </source>
</evidence>
<comment type="function">
    <text evidence="1">Specifically methylates the uridine in position 2552 of 23S rRNA at the 2'-O position of the ribose in the fully assembled 50S ribosomal subunit.</text>
</comment>
<comment type="catalytic activity">
    <reaction evidence="1">
        <text>uridine(2552) in 23S rRNA + S-adenosyl-L-methionine = 2'-O-methyluridine(2552) in 23S rRNA + S-adenosyl-L-homocysteine + H(+)</text>
        <dbReference type="Rhea" id="RHEA:42720"/>
        <dbReference type="Rhea" id="RHEA-COMP:10202"/>
        <dbReference type="Rhea" id="RHEA-COMP:10203"/>
        <dbReference type="ChEBI" id="CHEBI:15378"/>
        <dbReference type="ChEBI" id="CHEBI:57856"/>
        <dbReference type="ChEBI" id="CHEBI:59789"/>
        <dbReference type="ChEBI" id="CHEBI:65315"/>
        <dbReference type="ChEBI" id="CHEBI:74478"/>
        <dbReference type="EC" id="2.1.1.166"/>
    </reaction>
</comment>
<comment type="subcellular location">
    <subcellularLocation>
        <location evidence="1">Cytoplasm</location>
    </subcellularLocation>
</comment>
<comment type="similarity">
    <text evidence="1">Belongs to the class I-like SAM-binding methyltransferase superfamily. RNA methyltransferase RlmE family.</text>
</comment>
<dbReference type="EC" id="2.1.1.166" evidence="1"/>
<dbReference type="EMBL" id="CP000076">
    <property type="protein sequence ID" value="AAY96235.1"/>
    <property type="molecule type" value="Genomic_DNA"/>
</dbReference>
<dbReference type="RefSeq" id="WP_011059196.1">
    <property type="nucleotide sequence ID" value="NC_004129.6"/>
</dbReference>
<dbReference type="SMR" id="Q4KIG3"/>
<dbReference type="STRING" id="220664.PFL_0835"/>
<dbReference type="GeneID" id="57473835"/>
<dbReference type="KEGG" id="pfl:PFL_0835"/>
<dbReference type="PATRIC" id="fig|220664.5.peg.856"/>
<dbReference type="eggNOG" id="COG0293">
    <property type="taxonomic scope" value="Bacteria"/>
</dbReference>
<dbReference type="HOGENOM" id="CLU_009422_4_0_6"/>
<dbReference type="Proteomes" id="UP000008540">
    <property type="component" value="Chromosome"/>
</dbReference>
<dbReference type="GO" id="GO:0005737">
    <property type="term" value="C:cytoplasm"/>
    <property type="evidence" value="ECO:0007669"/>
    <property type="project" value="UniProtKB-SubCell"/>
</dbReference>
<dbReference type="GO" id="GO:0008650">
    <property type="term" value="F:rRNA (uridine-2'-O-)-methyltransferase activity"/>
    <property type="evidence" value="ECO:0007669"/>
    <property type="project" value="UniProtKB-UniRule"/>
</dbReference>
<dbReference type="FunFam" id="3.40.50.150:FF:000005">
    <property type="entry name" value="Ribosomal RNA large subunit methyltransferase E"/>
    <property type="match status" value="1"/>
</dbReference>
<dbReference type="Gene3D" id="3.40.50.150">
    <property type="entry name" value="Vaccinia Virus protein VP39"/>
    <property type="match status" value="1"/>
</dbReference>
<dbReference type="HAMAP" id="MF_01547">
    <property type="entry name" value="RNA_methyltr_E"/>
    <property type="match status" value="1"/>
</dbReference>
<dbReference type="InterPro" id="IPR050082">
    <property type="entry name" value="RNA_methyltr_RlmE"/>
</dbReference>
<dbReference type="InterPro" id="IPR002877">
    <property type="entry name" value="RNA_MeTrfase_FtsJ_dom"/>
</dbReference>
<dbReference type="InterPro" id="IPR015507">
    <property type="entry name" value="rRNA-MeTfrase_E"/>
</dbReference>
<dbReference type="InterPro" id="IPR029063">
    <property type="entry name" value="SAM-dependent_MTases_sf"/>
</dbReference>
<dbReference type="NCBIfam" id="NF008390">
    <property type="entry name" value="PRK11188.1"/>
    <property type="match status" value="1"/>
</dbReference>
<dbReference type="PANTHER" id="PTHR10920">
    <property type="entry name" value="RIBOSOMAL RNA METHYLTRANSFERASE"/>
    <property type="match status" value="1"/>
</dbReference>
<dbReference type="PANTHER" id="PTHR10920:SF18">
    <property type="entry name" value="RRNA METHYLTRANSFERASE 2, MITOCHONDRIAL"/>
    <property type="match status" value="1"/>
</dbReference>
<dbReference type="Pfam" id="PF01728">
    <property type="entry name" value="FtsJ"/>
    <property type="match status" value="1"/>
</dbReference>
<dbReference type="PIRSF" id="PIRSF005461">
    <property type="entry name" value="23S_rRNA_mtase"/>
    <property type="match status" value="1"/>
</dbReference>
<dbReference type="SUPFAM" id="SSF53335">
    <property type="entry name" value="S-adenosyl-L-methionine-dependent methyltransferases"/>
    <property type="match status" value="1"/>
</dbReference>
<sequence length="209" mass="23402">MARSKTSHNWLKEHFNDPFVKMAQKDGYRSRASYKLLEIQEKDRLIRPGMSVIDLGAAPGGWSQVTSRLIGGQGRLIASDILEMDSIPDVTFIQGDFTEDAVLAQILEAVGNSEVDLVISDMAPNMSGLAAVDMPRAMFLCELALDLAGRVLRPGGDFLIKIFQGEGFDEYHKSVRQMFEKVQMRKPSSSRDRSREQYLLGRGFRGRSE</sequence>
<reference key="1">
    <citation type="journal article" date="2005" name="Nat. Biotechnol.">
        <title>Complete genome sequence of the plant commensal Pseudomonas fluorescens Pf-5.</title>
        <authorList>
            <person name="Paulsen I.T."/>
            <person name="Press C.M."/>
            <person name="Ravel J."/>
            <person name="Kobayashi D.Y."/>
            <person name="Myers G.S.A."/>
            <person name="Mavrodi D.V."/>
            <person name="DeBoy R.T."/>
            <person name="Seshadri R."/>
            <person name="Ren Q."/>
            <person name="Madupu R."/>
            <person name="Dodson R.J."/>
            <person name="Durkin A.S."/>
            <person name="Brinkac L.M."/>
            <person name="Daugherty S.C."/>
            <person name="Sullivan S.A."/>
            <person name="Rosovitz M.J."/>
            <person name="Gwinn M.L."/>
            <person name="Zhou L."/>
            <person name="Schneider D.J."/>
            <person name="Cartinhour S.W."/>
            <person name="Nelson W.C."/>
            <person name="Weidman J."/>
            <person name="Watkins K."/>
            <person name="Tran K."/>
            <person name="Khouri H."/>
            <person name="Pierson E.A."/>
            <person name="Pierson L.S. III"/>
            <person name="Thomashow L.S."/>
            <person name="Loper J.E."/>
        </authorList>
    </citation>
    <scope>NUCLEOTIDE SEQUENCE [LARGE SCALE GENOMIC DNA]</scope>
    <source>
        <strain>ATCC BAA-477 / NRRL B-23932 / Pf-5</strain>
    </source>
</reference>
<keyword id="KW-0963">Cytoplasm</keyword>
<keyword id="KW-0489">Methyltransferase</keyword>
<keyword id="KW-0698">rRNA processing</keyword>
<keyword id="KW-0949">S-adenosyl-L-methionine</keyword>
<keyword id="KW-0808">Transferase</keyword>
<protein>
    <recommendedName>
        <fullName evidence="1">Ribosomal RNA large subunit methyltransferase E</fullName>
        <ecNumber evidence="1">2.1.1.166</ecNumber>
    </recommendedName>
    <alternativeName>
        <fullName evidence="1">23S rRNA Um2552 methyltransferase</fullName>
    </alternativeName>
    <alternativeName>
        <fullName evidence="1">rRNA (uridine-2'-O-)-methyltransferase</fullName>
    </alternativeName>
</protein>
<organism>
    <name type="scientific">Pseudomonas fluorescens (strain ATCC BAA-477 / NRRL B-23932 / Pf-5)</name>
    <dbReference type="NCBI Taxonomy" id="220664"/>
    <lineage>
        <taxon>Bacteria</taxon>
        <taxon>Pseudomonadati</taxon>
        <taxon>Pseudomonadota</taxon>
        <taxon>Gammaproteobacteria</taxon>
        <taxon>Pseudomonadales</taxon>
        <taxon>Pseudomonadaceae</taxon>
        <taxon>Pseudomonas</taxon>
    </lineage>
</organism>